<sequence length="500" mass="56304">MPSSGRALLDSPLDSGSLTSLDSSVFCSEGEGEPLALGDCFTVNVGGSRFVLSQQALSCFPHTRLGKLAVVVASYRRPGALAAVPSPLELCDDANPVDNEYFFDRSSQAFRYVLHYYRTGRLHVMEQLCALSFLQEIQYWGIDELSIDSCCRDRYFRRKELSETLDFKKDTEDQESQHESEQDFSQGPCPTVRQKLWNILEKPGSSTAARIFGVISIIFVVVSIINMALMSAELSWLDLQLLEILEYVCISWFTGEFVLRFLCVRDRCRFLRKVPNIIDLLAILPFYITLLVESLSGSQTTQELENVGRIVQVLRLLRALRMLKLGRHSTGLRSLGMTITQCYEEVGLLLLFLSVGISIFSTVEYFAEQSIPDTTFTSVPCAWWWATTSMTTVGYGDIRPDTTTGKIVAFMCILSGILVLALPIAIINDRFSACYFTLKLKEAAVRQREALKKLTKNIATDSYISVNLRDVYARSIMEMLRLKGRERASTRSSGGDDFWF</sequence>
<accession>Q9GKU7</accession>
<feature type="chain" id="PRO_0000308351" description="Potassium voltage-gated channel subfamily V member 1">
    <location>
        <begin position="1"/>
        <end position="500"/>
    </location>
</feature>
<feature type="topological domain" description="Cytoplasmic" evidence="2">
    <location>
        <begin position="1"/>
        <end position="210"/>
    </location>
</feature>
<feature type="transmembrane region" description="Helical; Name=Segment S1" evidence="2">
    <location>
        <begin position="211"/>
        <end position="231"/>
    </location>
</feature>
<feature type="topological domain" description="Extracellular" evidence="2">
    <location>
        <begin position="232"/>
        <end position="238"/>
    </location>
</feature>
<feature type="transmembrane region" description="Helical; Name=Segment S2" evidence="2">
    <location>
        <begin position="239"/>
        <end position="259"/>
    </location>
</feature>
<feature type="topological domain" description="Cytoplasmic" evidence="2">
    <location>
        <begin position="260"/>
        <end position="276"/>
    </location>
</feature>
<feature type="transmembrane region" description="Helical; Name=Segment S3" evidence="2">
    <location>
        <begin position="277"/>
        <end position="297"/>
    </location>
</feature>
<feature type="topological domain" description="Extracellular" evidence="2">
    <location>
        <begin position="298"/>
        <end position="309"/>
    </location>
</feature>
<feature type="transmembrane region" description="Helical; Name=Segment S4" evidence="2">
    <location>
        <begin position="310"/>
        <end position="331"/>
    </location>
</feature>
<feature type="topological domain" description="Cytoplasmic" evidence="2">
    <location>
        <begin position="332"/>
        <end position="345"/>
    </location>
</feature>
<feature type="transmembrane region" description="Helical; Name=Segment S5" evidence="2">
    <location>
        <begin position="346"/>
        <end position="366"/>
    </location>
</feature>
<feature type="transmembrane region" description="Helical; Name=Segment S6" evidence="2">
    <location>
        <begin position="407"/>
        <end position="427"/>
    </location>
</feature>
<feature type="topological domain" description="Cytoplasmic" evidence="2">
    <location>
        <begin position="428"/>
        <end position="500"/>
    </location>
</feature>
<feature type="region of interest" description="Disordered" evidence="3">
    <location>
        <begin position="168"/>
        <end position="189"/>
    </location>
</feature>
<feature type="short sequence motif" description="Selectivity filter" evidence="1">
    <location>
        <begin position="392"/>
        <end position="397"/>
    </location>
</feature>
<feature type="compositionally biased region" description="Basic and acidic residues" evidence="3">
    <location>
        <begin position="168"/>
        <end position="181"/>
    </location>
</feature>
<organism>
    <name type="scientific">Macaca fascicularis</name>
    <name type="common">Crab-eating macaque</name>
    <name type="synonym">Cynomolgus monkey</name>
    <dbReference type="NCBI Taxonomy" id="9541"/>
    <lineage>
        <taxon>Eukaryota</taxon>
        <taxon>Metazoa</taxon>
        <taxon>Chordata</taxon>
        <taxon>Craniata</taxon>
        <taxon>Vertebrata</taxon>
        <taxon>Euteleostomi</taxon>
        <taxon>Mammalia</taxon>
        <taxon>Eutheria</taxon>
        <taxon>Euarchontoglires</taxon>
        <taxon>Primates</taxon>
        <taxon>Haplorrhini</taxon>
        <taxon>Catarrhini</taxon>
        <taxon>Cercopithecidae</taxon>
        <taxon>Cercopithecinae</taxon>
        <taxon>Macaca</taxon>
    </lineage>
</organism>
<dbReference type="EMBL" id="AB051133">
    <property type="protein sequence ID" value="BAB18159.1"/>
    <property type="molecule type" value="mRNA"/>
</dbReference>
<dbReference type="RefSeq" id="NP_001274541.1">
    <property type="nucleotide sequence ID" value="NM_001287612.1"/>
</dbReference>
<dbReference type="RefSeq" id="XP_005564006.1">
    <property type="nucleotide sequence ID" value="XM_005563949.4"/>
</dbReference>
<dbReference type="SMR" id="Q9GKU7"/>
<dbReference type="STRING" id="9541.ENSMFAP00000032221"/>
<dbReference type="Ensembl" id="ENSMFAT00000006442.2">
    <property type="protein sequence ID" value="ENSMFAP00000032221.1"/>
    <property type="gene ID" value="ENSMFAG00000037130.2"/>
</dbReference>
<dbReference type="GeneID" id="102134648"/>
<dbReference type="KEGG" id="mcf:102134648"/>
<dbReference type="CTD" id="27012"/>
<dbReference type="VEuPathDB" id="HostDB:ENSMFAG00000037130"/>
<dbReference type="eggNOG" id="KOG3713">
    <property type="taxonomic scope" value="Eukaryota"/>
</dbReference>
<dbReference type="GeneTree" id="ENSGT00940000159740"/>
<dbReference type="OMA" id="SGGDEFW"/>
<dbReference type="OrthoDB" id="10716at314294"/>
<dbReference type="Proteomes" id="UP000233100">
    <property type="component" value="Chromosome 8"/>
</dbReference>
<dbReference type="Bgee" id="ENSMFAG00000037130">
    <property type="expression patterns" value="Expressed in temporal lobe and 1 other cell type or tissue"/>
</dbReference>
<dbReference type="GO" id="GO:0045171">
    <property type="term" value="C:intercellular bridge"/>
    <property type="evidence" value="ECO:0007669"/>
    <property type="project" value="Ensembl"/>
</dbReference>
<dbReference type="GO" id="GO:0008076">
    <property type="term" value="C:voltage-gated potassium channel complex"/>
    <property type="evidence" value="ECO:0007669"/>
    <property type="project" value="InterPro"/>
</dbReference>
<dbReference type="GO" id="GO:0005249">
    <property type="term" value="F:voltage-gated potassium channel activity"/>
    <property type="evidence" value="ECO:0007669"/>
    <property type="project" value="InterPro"/>
</dbReference>
<dbReference type="GO" id="GO:0001508">
    <property type="term" value="P:action potential"/>
    <property type="evidence" value="ECO:0007669"/>
    <property type="project" value="TreeGrafter"/>
</dbReference>
<dbReference type="GO" id="GO:0051260">
    <property type="term" value="P:protein homooligomerization"/>
    <property type="evidence" value="ECO:0007669"/>
    <property type="project" value="InterPro"/>
</dbReference>
<dbReference type="FunFam" id="1.10.287.70:FF:000005">
    <property type="entry name" value="potassium voltage-gated channel subfamily G member 1"/>
    <property type="match status" value="1"/>
</dbReference>
<dbReference type="FunFam" id="1.20.120.350:FF:000044">
    <property type="entry name" value="Potassium voltage-gated channel subfamily V member 1"/>
    <property type="match status" value="1"/>
</dbReference>
<dbReference type="FunFam" id="3.30.710.10:FF:000067">
    <property type="entry name" value="Potassium voltage-gated channel subfamily V member 1"/>
    <property type="match status" value="1"/>
</dbReference>
<dbReference type="Gene3D" id="1.10.287.70">
    <property type="match status" value="1"/>
</dbReference>
<dbReference type="Gene3D" id="3.30.710.10">
    <property type="entry name" value="Potassium Channel Kv1.1, Chain A"/>
    <property type="match status" value="1"/>
</dbReference>
<dbReference type="Gene3D" id="1.20.120.350">
    <property type="entry name" value="Voltage-gated potassium channels. Chain C"/>
    <property type="match status" value="1"/>
</dbReference>
<dbReference type="InterPro" id="IPR000210">
    <property type="entry name" value="BTB/POZ_dom"/>
</dbReference>
<dbReference type="InterPro" id="IPR005821">
    <property type="entry name" value="Ion_trans_dom"/>
</dbReference>
<dbReference type="InterPro" id="IPR003968">
    <property type="entry name" value="K_chnl_volt-dep_Kv"/>
</dbReference>
<dbReference type="InterPro" id="IPR003970">
    <property type="entry name" value="K_chnl_volt-dep_Kv8.1"/>
</dbReference>
<dbReference type="InterPro" id="IPR011333">
    <property type="entry name" value="SKP1/BTB/POZ_sf"/>
</dbReference>
<dbReference type="InterPro" id="IPR003131">
    <property type="entry name" value="T1-type_BTB"/>
</dbReference>
<dbReference type="InterPro" id="IPR028325">
    <property type="entry name" value="VG_K_chnl"/>
</dbReference>
<dbReference type="InterPro" id="IPR027359">
    <property type="entry name" value="Volt_channel_dom_sf"/>
</dbReference>
<dbReference type="PANTHER" id="PTHR11537:SF38">
    <property type="entry name" value="POTASSIUM VOLTAGE-GATED CHANNEL SUBFAMILY V MEMBER 1"/>
    <property type="match status" value="1"/>
</dbReference>
<dbReference type="PANTHER" id="PTHR11537">
    <property type="entry name" value="VOLTAGE-GATED POTASSIUM CHANNEL"/>
    <property type="match status" value="1"/>
</dbReference>
<dbReference type="Pfam" id="PF02214">
    <property type="entry name" value="BTB_2"/>
    <property type="match status" value="1"/>
</dbReference>
<dbReference type="Pfam" id="PF00520">
    <property type="entry name" value="Ion_trans"/>
    <property type="match status" value="1"/>
</dbReference>
<dbReference type="PRINTS" id="PR00169">
    <property type="entry name" value="KCHANNEL"/>
</dbReference>
<dbReference type="PRINTS" id="PR01493">
    <property type="entry name" value="KV8CHANNEL"/>
</dbReference>
<dbReference type="PRINTS" id="PR01491">
    <property type="entry name" value="KVCHANNEL"/>
</dbReference>
<dbReference type="SMART" id="SM00225">
    <property type="entry name" value="BTB"/>
    <property type="match status" value="1"/>
</dbReference>
<dbReference type="SUPFAM" id="SSF54695">
    <property type="entry name" value="POZ domain"/>
    <property type="match status" value="1"/>
</dbReference>
<dbReference type="SUPFAM" id="SSF81324">
    <property type="entry name" value="Voltage-gated potassium channels"/>
    <property type="match status" value="1"/>
</dbReference>
<evidence type="ECO:0000250" key="1"/>
<evidence type="ECO:0000255" key="2"/>
<evidence type="ECO:0000256" key="3">
    <source>
        <dbReference type="SAM" id="MobiDB-lite"/>
    </source>
</evidence>
<evidence type="ECO:0000305" key="4"/>
<protein>
    <recommendedName>
        <fullName>Potassium voltage-gated channel subfamily V member 1</fullName>
    </recommendedName>
    <alternativeName>
        <fullName>Voltage-gated potassium channel subunit Kv8.1</fullName>
    </alternativeName>
</protein>
<reference key="1">
    <citation type="submission" date="2000-11" db="EMBL/GenBank/DDBJ databases">
        <title>Isolation of full-length cDNA clones from macaque brain cDNA libraries.</title>
        <authorList>
            <person name="Osada N."/>
            <person name="Hida M."/>
            <person name="Kusuda J."/>
            <person name="Tanuma R."/>
            <person name="Iseki K."/>
            <person name="Hirai M."/>
            <person name="Terao K."/>
            <person name="Suzuki Y."/>
            <person name="Sugano S."/>
            <person name="Hashimoto K."/>
        </authorList>
    </citation>
    <scope>NUCLEOTIDE SEQUENCE [LARGE SCALE MRNA]</scope>
    <source>
        <tissue>Brain cortex</tissue>
    </source>
</reference>
<name>KCNV1_MACFA</name>
<gene>
    <name type="primary">KCNV1</name>
    <name type="ORF">QccE-20536</name>
</gene>
<comment type="function">
    <text evidence="1">Potassium channel subunit that does not form functional channels by itself. Modulates KCNB1 and KCNB2 channel activity by shifting the threshold for inactivation to more negative values and by slowing the rate of inactivation. Can down-regulate the channel activity of KCNB1, KCNB2, KCNC4 and KCND1, possibly by trapping them in intracellular membranes (By similarity).</text>
</comment>
<comment type="subunit">
    <text evidence="1">Heteromultimer with KCNB1 and KCNB2. Interacts with KCNC4 and KCND1 (By similarity).</text>
</comment>
<comment type="subcellular location">
    <subcellularLocation>
        <location evidence="1">Cell membrane</location>
        <topology evidence="1">Multi-pass membrane protein</topology>
    </subcellularLocation>
    <text evidence="1">Has to be associated with another potassium channel subunit to get inserted in the plasma membrane. Remains intracellular in the absence of KCNB2 (By similarity).</text>
</comment>
<comment type="domain">
    <text evidence="1">The segment S4 is probably the voltage-sensor and is characterized by a series of positively charged amino acids at every third position.</text>
</comment>
<comment type="similarity">
    <text evidence="4">Belongs to the potassium channel family. V (TC 1.A.1.2) subfamily. Kv8.1/KCNV1 sub-subfamily.</text>
</comment>
<keyword id="KW-1003">Cell membrane</keyword>
<keyword id="KW-0407">Ion channel</keyword>
<keyword id="KW-0406">Ion transport</keyword>
<keyword id="KW-0472">Membrane</keyword>
<keyword id="KW-0630">Potassium</keyword>
<keyword id="KW-0631">Potassium channel</keyword>
<keyword id="KW-0633">Potassium transport</keyword>
<keyword id="KW-1185">Reference proteome</keyword>
<keyword id="KW-0812">Transmembrane</keyword>
<keyword id="KW-1133">Transmembrane helix</keyword>
<keyword id="KW-0813">Transport</keyword>
<keyword id="KW-0851">Voltage-gated channel</keyword>
<proteinExistence type="evidence at transcript level"/>